<sequence>MQKYALHAYPVMALMVATLTGCAWIPAKPLVQGATTAQPIPGPVPVANGSIFQSAQPINYGYQPLFEDRRPRNIGDTLTIVLQENVSASKSSSANASRDGKTSFGFDTVPRYLQGLFGNSRADMEASGGNSFNGKGGANASNTFSGTLTVTVDQVLANGNLHVVGEKQIAINQGTEFIRFSGVVNPRTISGSNSVPSTQVADARIEYVGNGYLNEAQNMGWLQRFFLNLSPM</sequence>
<organism>
    <name type="scientific">Salmonella gallinarum (strain 287/91 / NCTC 13346)</name>
    <dbReference type="NCBI Taxonomy" id="550538"/>
    <lineage>
        <taxon>Bacteria</taxon>
        <taxon>Pseudomonadati</taxon>
        <taxon>Pseudomonadota</taxon>
        <taxon>Gammaproteobacteria</taxon>
        <taxon>Enterobacterales</taxon>
        <taxon>Enterobacteriaceae</taxon>
        <taxon>Salmonella</taxon>
    </lineage>
</organism>
<evidence type="ECO:0000255" key="1">
    <source>
        <dbReference type="HAMAP-Rule" id="MF_00415"/>
    </source>
</evidence>
<reference key="1">
    <citation type="journal article" date="2008" name="Genome Res.">
        <title>Comparative genome analysis of Salmonella enteritidis PT4 and Salmonella gallinarum 287/91 provides insights into evolutionary and host adaptation pathways.</title>
        <authorList>
            <person name="Thomson N.R."/>
            <person name="Clayton D.J."/>
            <person name="Windhorst D."/>
            <person name="Vernikos G."/>
            <person name="Davidson S."/>
            <person name="Churcher C."/>
            <person name="Quail M.A."/>
            <person name="Stevens M."/>
            <person name="Jones M.A."/>
            <person name="Watson M."/>
            <person name="Barron A."/>
            <person name="Layton A."/>
            <person name="Pickard D."/>
            <person name="Kingsley R.A."/>
            <person name="Bignell A."/>
            <person name="Clark L."/>
            <person name="Harris B."/>
            <person name="Ormond D."/>
            <person name="Abdellah Z."/>
            <person name="Brooks K."/>
            <person name="Cherevach I."/>
            <person name="Chillingworth T."/>
            <person name="Woodward J."/>
            <person name="Norberczak H."/>
            <person name="Lord A."/>
            <person name="Arrowsmith C."/>
            <person name="Jagels K."/>
            <person name="Moule S."/>
            <person name="Mungall K."/>
            <person name="Saunders M."/>
            <person name="Whitehead S."/>
            <person name="Chabalgoity J.A."/>
            <person name="Maskell D."/>
            <person name="Humphreys T."/>
            <person name="Roberts M."/>
            <person name="Barrow P.A."/>
            <person name="Dougan G."/>
            <person name="Parkhill J."/>
        </authorList>
    </citation>
    <scope>NUCLEOTIDE SEQUENCE [LARGE SCALE GENOMIC DNA]</scope>
    <source>
        <strain>287/91 / NCTC 13346</strain>
    </source>
</reference>
<protein>
    <recommendedName>
        <fullName evidence="1">Flagellar L-ring protein</fullName>
    </recommendedName>
    <alternativeName>
        <fullName evidence="1">Basal body L-ring protein</fullName>
    </alternativeName>
</protein>
<feature type="signal peptide" evidence="1">
    <location>
        <begin position="1"/>
        <end position="21"/>
    </location>
</feature>
<feature type="chain" id="PRO_1000123957" description="Flagellar L-ring protein">
    <location>
        <begin position="22"/>
        <end position="232"/>
    </location>
</feature>
<feature type="lipid moiety-binding region" description="N-palmitoyl cysteine" evidence="1">
    <location>
        <position position="22"/>
    </location>
</feature>
<feature type="lipid moiety-binding region" description="S-diacylglycerol cysteine" evidence="1">
    <location>
        <position position="22"/>
    </location>
</feature>
<proteinExistence type="inferred from homology"/>
<comment type="function">
    <text evidence="1">Assembles around the rod to form the L-ring and probably protects the motor/basal body from shearing forces during rotation.</text>
</comment>
<comment type="subunit">
    <text evidence="1">The basal body constitutes a major portion of the flagellar organelle and consists of four rings (L,P,S, and M) mounted on a central rod.</text>
</comment>
<comment type="subcellular location">
    <subcellularLocation>
        <location evidence="1">Cell outer membrane</location>
        <topology evidence="1">Lipid-anchor</topology>
    </subcellularLocation>
    <subcellularLocation>
        <location evidence="1">Bacterial flagellum basal body</location>
    </subcellularLocation>
</comment>
<comment type="similarity">
    <text evidence="1">Belongs to the FlgH family.</text>
</comment>
<accession>B5RBC1</accession>
<gene>
    <name evidence="1" type="primary">flgH</name>
    <name type="ordered locus">SG1942</name>
</gene>
<keyword id="KW-0975">Bacterial flagellum</keyword>
<keyword id="KW-0998">Cell outer membrane</keyword>
<keyword id="KW-0449">Lipoprotein</keyword>
<keyword id="KW-0472">Membrane</keyword>
<keyword id="KW-0564">Palmitate</keyword>
<keyword id="KW-0732">Signal</keyword>
<dbReference type="EMBL" id="AM933173">
    <property type="protein sequence ID" value="CAR37792.1"/>
    <property type="molecule type" value="Genomic_DNA"/>
</dbReference>
<dbReference type="RefSeq" id="WP_001174898.1">
    <property type="nucleotide sequence ID" value="NC_011274.1"/>
</dbReference>
<dbReference type="SMR" id="B5RBC1"/>
<dbReference type="KEGG" id="seg:SG1942"/>
<dbReference type="HOGENOM" id="CLU_069313_0_0_6"/>
<dbReference type="Proteomes" id="UP000008321">
    <property type="component" value="Chromosome"/>
</dbReference>
<dbReference type="GO" id="GO:0009427">
    <property type="term" value="C:bacterial-type flagellum basal body, distal rod, L ring"/>
    <property type="evidence" value="ECO:0007669"/>
    <property type="project" value="InterPro"/>
</dbReference>
<dbReference type="GO" id="GO:0009279">
    <property type="term" value="C:cell outer membrane"/>
    <property type="evidence" value="ECO:0007669"/>
    <property type="project" value="UniProtKB-SubCell"/>
</dbReference>
<dbReference type="GO" id="GO:0003774">
    <property type="term" value="F:cytoskeletal motor activity"/>
    <property type="evidence" value="ECO:0007669"/>
    <property type="project" value="InterPro"/>
</dbReference>
<dbReference type="GO" id="GO:0071973">
    <property type="term" value="P:bacterial-type flagellum-dependent cell motility"/>
    <property type="evidence" value="ECO:0007669"/>
    <property type="project" value="InterPro"/>
</dbReference>
<dbReference type="HAMAP" id="MF_00415">
    <property type="entry name" value="FlgH"/>
    <property type="match status" value="1"/>
</dbReference>
<dbReference type="InterPro" id="IPR000527">
    <property type="entry name" value="Flag_Lring"/>
</dbReference>
<dbReference type="NCBIfam" id="NF001301">
    <property type="entry name" value="PRK00249.1-1"/>
    <property type="match status" value="1"/>
</dbReference>
<dbReference type="PANTHER" id="PTHR34933">
    <property type="entry name" value="FLAGELLAR L-RING PROTEIN"/>
    <property type="match status" value="1"/>
</dbReference>
<dbReference type="PANTHER" id="PTHR34933:SF3">
    <property type="entry name" value="FLAGELLAR L-RING PROTEIN"/>
    <property type="match status" value="1"/>
</dbReference>
<dbReference type="Pfam" id="PF02107">
    <property type="entry name" value="FlgH"/>
    <property type="match status" value="1"/>
</dbReference>
<dbReference type="PRINTS" id="PR01008">
    <property type="entry name" value="FLGLRINGFLGH"/>
</dbReference>
<dbReference type="PROSITE" id="PS51257">
    <property type="entry name" value="PROKAR_LIPOPROTEIN"/>
    <property type="match status" value="1"/>
</dbReference>
<name>FLGH_SALG2</name>